<protein>
    <recommendedName>
        <fullName>Proline iminopeptidase</fullName>
        <shortName>PIP</shortName>
        <ecNumber>3.4.11.5</ecNumber>
    </recommendedName>
    <alternativeName>
        <fullName>Prolyl aminopeptidase</fullName>
        <shortName>PAP</shortName>
    </alternativeName>
</protein>
<feature type="chain" id="PRO_0000080847" description="Proline iminopeptidase">
    <location>
        <begin position="1"/>
        <end position="313"/>
    </location>
</feature>
<feature type="domain" description="AB hydrolase-1" evidence="2">
    <location>
        <begin position="35"/>
        <end position="298"/>
    </location>
</feature>
<feature type="active site" description="Nucleophile" evidence="3">
    <location>
        <position position="110"/>
    </location>
</feature>
<feature type="active site" evidence="3">
    <location>
        <position position="266"/>
    </location>
</feature>
<feature type="active site" description="Proton donor" evidence="3">
    <location>
        <position position="294"/>
    </location>
</feature>
<feature type="sequence conflict" description="In Ref. 3; BAA11623." evidence="4" ref="3">
    <original>L</original>
    <variation>V</variation>
    <location>
        <position position="95"/>
    </location>
</feature>
<feature type="sequence conflict" description="In Ref. 3; BAA11623." evidence="4" ref="3">
    <original>ADPSAAGHQ</original>
    <variation>QTHPQQVTE</variation>
    <location>
        <begin position="121"/>
        <end position="129"/>
    </location>
</feature>
<feature type="sequence conflict" description="In Ref. 3; BAA11623." evidence="4" ref="3">
    <original>QLLRDAH</original>
    <variation>SCCATD</variation>
    <location>
        <begin position="245"/>
        <end position="251"/>
    </location>
</feature>
<feature type="sequence conflict" description="In Ref. 3; BAA11623." evidence="4" ref="3">
    <location>
        <position position="284"/>
    </location>
</feature>
<feature type="strand" evidence="5">
    <location>
        <begin position="11"/>
        <end position="17"/>
    </location>
</feature>
<feature type="strand" evidence="5">
    <location>
        <begin position="19"/>
        <end position="21"/>
    </location>
</feature>
<feature type="strand" evidence="5">
    <location>
        <begin position="23"/>
        <end position="30"/>
    </location>
</feature>
<feature type="strand" evidence="5">
    <location>
        <begin position="34"/>
        <end position="40"/>
    </location>
</feature>
<feature type="turn" evidence="5">
    <location>
        <begin position="43"/>
        <end position="46"/>
    </location>
</feature>
<feature type="helix" evidence="5">
    <location>
        <begin position="50"/>
        <end position="55"/>
    </location>
</feature>
<feature type="turn" evidence="5">
    <location>
        <begin position="58"/>
        <end position="60"/>
    </location>
</feature>
<feature type="strand" evidence="5">
    <location>
        <begin position="61"/>
        <end position="66"/>
    </location>
</feature>
<feature type="strand" evidence="5">
    <location>
        <begin position="74"/>
        <end position="76"/>
    </location>
</feature>
<feature type="helix" evidence="5">
    <location>
        <begin position="85"/>
        <end position="98"/>
    </location>
</feature>
<feature type="strand" evidence="5">
    <location>
        <begin position="102"/>
        <end position="109"/>
    </location>
</feature>
<feature type="helix" evidence="5">
    <location>
        <begin position="111"/>
        <end position="122"/>
    </location>
</feature>
<feature type="helix" evidence="5">
    <location>
        <begin position="124"/>
        <end position="126"/>
    </location>
</feature>
<feature type="strand" evidence="5">
    <location>
        <begin position="127"/>
        <end position="134"/>
    </location>
</feature>
<feature type="helix" evidence="5">
    <location>
        <begin position="140"/>
        <end position="147"/>
    </location>
</feature>
<feature type="helix" evidence="5">
    <location>
        <begin position="151"/>
        <end position="154"/>
    </location>
</feature>
<feature type="helix" evidence="5">
    <location>
        <begin position="156"/>
        <end position="164"/>
    </location>
</feature>
<feature type="helix" evidence="5">
    <location>
        <begin position="168"/>
        <end position="170"/>
    </location>
</feature>
<feature type="helix" evidence="5">
    <location>
        <begin position="174"/>
        <end position="182"/>
    </location>
</feature>
<feature type="helix" evidence="5">
    <location>
        <begin position="187"/>
        <end position="203"/>
    </location>
</feature>
<feature type="strand" evidence="5">
    <location>
        <begin position="205"/>
        <end position="208"/>
    </location>
</feature>
<feature type="helix" evidence="5">
    <location>
        <begin position="211"/>
        <end position="217"/>
    </location>
</feature>
<feature type="helix" evidence="5">
    <location>
        <begin position="220"/>
        <end position="235"/>
    </location>
</feature>
<feature type="helix" evidence="5">
    <location>
        <begin position="237"/>
        <end position="239"/>
    </location>
</feature>
<feature type="helix" evidence="5">
    <location>
        <begin position="245"/>
        <end position="248"/>
    </location>
</feature>
<feature type="helix" evidence="5">
    <location>
        <begin position="250"/>
        <end position="253"/>
    </location>
</feature>
<feature type="strand" evidence="5">
    <location>
        <begin position="258"/>
        <end position="263"/>
    </location>
</feature>
<feature type="strand" evidence="5">
    <location>
        <begin position="267"/>
        <end position="269"/>
    </location>
</feature>
<feature type="helix" evidence="5">
    <location>
        <begin position="271"/>
        <end position="280"/>
    </location>
</feature>
<feature type="strand" evidence="5">
    <location>
        <begin position="284"/>
        <end position="289"/>
    </location>
</feature>
<feature type="helix" evidence="5">
    <location>
        <begin position="299"/>
        <end position="312"/>
    </location>
</feature>
<comment type="function">
    <text>May be involved in proline metabolism and sensitivity to ascamycin. Has ascamycin dealanylating activity.</text>
</comment>
<comment type="catalytic activity">
    <reaction>
        <text>Release of N-terminal proline from a peptide.</text>
        <dbReference type="EC" id="3.4.11.5"/>
    </reaction>
</comment>
<comment type="subunit">
    <text>Homooligomer.</text>
</comment>
<comment type="subcellular location">
    <subcellularLocation>
        <location evidence="1">Cytoplasm</location>
    </subcellularLocation>
</comment>
<comment type="similarity">
    <text evidence="4">Belongs to the peptidase S33 family.</text>
</comment>
<organism>
    <name type="scientific">Xanthomonas citri</name>
    <name type="common">Xanthomonas campestris pv. citri</name>
    <dbReference type="NCBI Taxonomy" id="346"/>
    <lineage>
        <taxon>Bacteria</taxon>
        <taxon>Pseudomonadati</taxon>
        <taxon>Pseudomonadota</taxon>
        <taxon>Gammaproteobacteria</taxon>
        <taxon>Lysobacterales</taxon>
        <taxon>Lysobacteraceae</taxon>
        <taxon>Xanthomonas</taxon>
    </lineage>
</organism>
<name>PIP_XANCI</name>
<reference key="1">
    <citation type="journal article" date="1996" name="Microbiology">
        <title>Proline iminopeptidase gene from Xanthomonas campestris pv. citri.</title>
        <authorList>
            <person name="Alonso J."/>
            <person name="Garcia J.L."/>
        </authorList>
    </citation>
    <scope>NUCLEOTIDE SEQUENCE [GENOMIC DNA]</scope>
    <source>
        <strain>NBRC 3835</strain>
    </source>
</reference>
<reference key="2">
    <citation type="submission" date="1997-02" db="EMBL/GenBank/DDBJ databases">
        <authorList>
            <person name="Alonso J."/>
        </authorList>
    </citation>
    <scope>SEQUENCE REVISION</scope>
</reference>
<reference key="3">
    <citation type="journal article" date="1996" name="Biochem. J.">
        <title>Isolation and characterization of the gene encoding an aminopeptidase involved in the selective toxicity of ascamycin toward Xanthomonas campestris pv. citri.</title>
        <authorList>
            <person name="Sudo T."/>
            <person name="Shinohara K."/>
            <person name="Dohmae N."/>
            <person name="Takio K."/>
            <person name="Usami R."/>
            <person name="Horikoshi K."/>
            <person name="Osada H."/>
        </authorList>
    </citation>
    <scope>NUCLEOTIDE SEQUENCE [GENOMIC DNA]</scope>
    <scope>PROTEIN SEQUENCE OF 1-20 AND 283-296</scope>
    <source>
        <strain>NBRC 3781</strain>
    </source>
</reference>
<reference key="4">
    <citation type="journal article" date="1998" name="EMBO J.">
        <title>Structure of proline iminopeptidase from Xanthomonas campestris pv. citri: a prototype for the prolyl oligopeptidase family.</title>
        <authorList>
            <person name="Medrano F.J."/>
            <person name="Alonso J."/>
            <person name="Garcia J.L."/>
            <person name="Romero A."/>
            <person name="Bode W."/>
            <person name="Gomis-Ruth F.X."/>
        </authorList>
    </citation>
    <scope>X-RAY CRYSTALLOGRAPHY (2.7 ANGSTROMS)</scope>
    <scope>ACTIVE SITE</scope>
</reference>
<proteinExistence type="evidence at protein level"/>
<gene>
    <name type="primary">pip</name>
    <name type="synonym">xap</name>
</gene>
<evidence type="ECO:0000250" key="1"/>
<evidence type="ECO:0000255" key="2"/>
<evidence type="ECO:0000269" key="3">
    <source>
    </source>
</evidence>
<evidence type="ECO:0000305" key="4"/>
<evidence type="ECO:0007829" key="5">
    <source>
        <dbReference type="PDB" id="1AZW"/>
    </source>
</evidence>
<keyword id="KW-0002">3D-structure</keyword>
<keyword id="KW-0031">Aminopeptidase</keyword>
<keyword id="KW-0963">Cytoplasm</keyword>
<keyword id="KW-0903">Direct protein sequencing</keyword>
<keyword id="KW-0378">Hydrolase</keyword>
<keyword id="KW-0645">Protease</keyword>
<sequence length="313" mass="35260">MRTLYPEITPYQQGSLKVDDRHTLYFEQCGNPHGKPVVMLHGGPGGGCNDKMRRFHDPAKYRIVLFDQRGSGRSTPHADLVDNTTWDLVADIERLRTHLGVDRWQVFGGSWGSTLALAYAADPSAAGHQLVLRGIFLLRRFELEWFYQEGASRLFPDAWEHYLNAIPPVERADLMSAFHRRLTSDDEATRLAAAKAWSVWEGATSFLHVDEDFVTGHEDAHFALAFARIENHYFVNGGFFEVEDQLLRDAHRIADIPGVIVHGRYDVVCPLQSAWDLHKAWPKAQLQISPASGHSAFEPENVDALVRATDGFA</sequence>
<dbReference type="EC" id="3.4.11.5"/>
<dbReference type="EMBL" id="Z54150">
    <property type="protein sequence ID" value="CAA90864.1"/>
    <property type="molecule type" value="Genomic_DNA"/>
</dbReference>
<dbReference type="EMBL" id="D82882">
    <property type="protein sequence ID" value="BAA11623.1"/>
    <property type="molecule type" value="Genomic_DNA"/>
</dbReference>
<dbReference type="PDB" id="1AZW">
    <property type="method" value="X-ray"/>
    <property type="resolution" value="2.70 A"/>
    <property type="chains" value="A/B=1-313"/>
</dbReference>
<dbReference type="PDBsum" id="1AZW"/>
<dbReference type="SMR" id="P52279"/>
<dbReference type="ESTHER" id="xanca-impep">
    <property type="family name" value="Proline_iminopeptidase"/>
</dbReference>
<dbReference type="MEROPS" id="S33.001"/>
<dbReference type="EvolutionaryTrace" id="P52279"/>
<dbReference type="GO" id="GO:0005737">
    <property type="term" value="C:cytoplasm"/>
    <property type="evidence" value="ECO:0007669"/>
    <property type="project" value="UniProtKB-SubCell"/>
</dbReference>
<dbReference type="GO" id="GO:0004177">
    <property type="term" value="F:aminopeptidase activity"/>
    <property type="evidence" value="ECO:0007669"/>
    <property type="project" value="UniProtKB-KW"/>
</dbReference>
<dbReference type="GO" id="GO:0006508">
    <property type="term" value="P:proteolysis"/>
    <property type="evidence" value="ECO:0007669"/>
    <property type="project" value="UniProtKB-KW"/>
</dbReference>
<dbReference type="Gene3D" id="3.40.50.1820">
    <property type="entry name" value="alpha/beta hydrolase"/>
    <property type="match status" value="1"/>
</dbReference>
<dbReference type="InterPro" id="IPR000073">
    <property type="entry name" value="AB_hydrolase_1"/>
</dbReference>
<dbReference type="InterPro" id="IPR029058">
    <property type="entry name" value="AB_hydrolase_fold"/>
</dbReference>
<dbReference type="InterPro" id="IPR002410">
    <property type="entry name" value="Peptidase_S33"/>
</dbReference>
<dbReference type="InterPro" id="IPR005944">
    <property type="entry name" value="Pro_iminopeptidase"/>
</dbReference>
<dbReference type="NCBIfam" id="TIGR01249">
    <property type="entry name" value="pro_imino_pep_1"/>
    <property type="match status" value="1"/>
</dbReference>
<dbReference type="PANTHER" id="PTHR43722">
    <property type="entry name" value="PROLINE IMINOPEPTIDASE"/>
    <property type="match status" value="1"/>
</dbReference>
<dbReference type="PANTHER" id="PTHR43722:SF1">
    <property type="entry name" value="PROLINE IMINOPEPTIDASE"/>
    <property type="match status" value="1"/>
</dbReference>
<dbReference type="Pfam" id="PF00561">
    <property type="entry name" value="Abhydrolase_1"/>
    <property type="match status" value="1"/>
</dbReference>
<dbReference type="PIRSF" id="PIRSF006431">
    <property type="entry name" value="Pept_S33"/>
    <property type="match status" value="1"/>
</dbReference>
<dbReference type="PRINTS" id="PR00793">
    <property type="entry name" value="PROAMNOPTASE"/>
</dbReference>
<dbReference type="SUPFAM" id="SSF53474">
    <property type="entry name" value="alpha/beta-Hydrolases"/>
    <property type="match status" value="1"/>
</dbReference>
<accession>P52279</accession>
<accession>P96186</accession>